<dbReference type="EC" id="6.3.5.-" evidence="1"/>
<dbReference type="EMBL" id="CP000096">
    <property type="protein sequence ID" value="ABB23225.1"/>
    <property type="molecule type" value="Genomic_DNA"/>
</dbReference>
<dbReference type="RefSeq" id="WP_011357100.1">
    <property type="nucleotide sequence ID" value="NC_007512.1"/>
</dbReference>
<dbReference type="SMR" id="Q3B606"/>
<dbReference type="STRING" id="319225.Plut_0337"/>
<dbReference type="KEGG" id="plt:Plut_0337"/>
<dbReference type="eggNOG" id="COG0721">
    <property type="taxonomic scope" value="Bacteria"/>
</dbReference>
<dbReference type="HOGENOM" id="CLU_105899_6_1_10"/>
<dbReference type="OrthoDB" id="9813938at2"/>
<dbReference type="Proteomes" id="UP000002709">
    <property type="component" value="Chromosome"/>
</dbReference>
<dbReference type="GO" id="GO:0050566">
    <property type="term" value="F:asparaginyl-tRNA synthase (glutamine-hydrolyzing) activity"/>
    <property type="evidence" value="ECO:0007669"/>
    <property type="project" value="RHEA"/>
</dbReference>
<dbReference type="GO" id="GO:0005524">
    <property type="term" value="F:ATP binding"/>
    <property type="evidence" value="ECO:0007669"/>
    <property type="project" value="UniProtKB-KW"/>
</dbReference>
<dbReference type="GO" id="GO:0050567">
    <property type="term" value="F:glutaminyl-tRNA synthase (glutamine-hydrolyzing) activity"/>
    <property type="evidence" value="ECO:0007669"/>
    <property type="project" value="UniProtKB-UniRule"/>
</dbReference>
<dbReference type="GO" id="GO:0070681">
    <property type="term" value="P:glutaminyl-tRNAGln biosynthesis via transamidation"/>
    <property type="evidence" value="ECO:0007669"/>
    <property type="project" value="TreeGrafter"/>
</dbReference>
<dbReference type="GO" id="GO:0006450">
    <property type="term" value="P:regulation of translational fidelity"/>
    <property type="evidence" value="ECO:0007669"/>
    <property type="project" value="InterPro"/>
</dbReference>
<dbReference type="GO" id="GO:0006412">
    <property type="term" value="P:translation"/>
    <property type="evidence" value="ECO:0007669"/>
    <property type="project" value="UniProtKB-UniRule"/>
</dbReference>
<dbReference type="Gene3D" id="1.10.20.60">
    <property type="entry name" value="Glu-tRNAGln amidotransferase C subunit, N-terminal domain"/>
    <property type="match status" value="1"/>
</dbReference>
<dbReference type="HAMAP" id="MF_00122">
    <property type="entry name" value="GatC"/>
    <property type="match status" value="1"/>
</dbReference>
<dbReference type="InterPro" id="IPR036113">
    <property type="entry name" value="Asp/Glu-ADT_sf_sub_c"/>
</dbReference>
<dbReference type="InterPro" id="IPR003837">
    <property type="entry name" value="GatC"/>
</dbReference>
<dbReference type="NCBIfam" id="TIGR00135">
    <property type="entry name" value="gatC"/>
    <property type="match status" value="1"/>
</dbReference>
<dbReference type="PANTHER" id="PTHR15004">
    <property type="entry name" value="GLUTAMYL-TRNA(GLN) AMIDOTRANSFERASE SUBUNIT C, MITOCHONDRIAL"/>
    <property type="match status" value="1"/>
</dbReference>
<dbReference type="PANTHER" id="PTHR15004:SF0">
    <property type="entry name" value="GLUTAMYL-TRNA(GLN) AMIDOTRANSFERASE SUBUNIT C, MITOCHONDRIAL"/>
    <property type="match status" value="1"/>
</dbReference>
<dbReference type="Pfam" id="PF02686">
    <property type="entry name" value="GatC"/>
    <property type="match status" value="1"/>
</dbReference>
<dbReference type="SUPFAM" id="SSF141000">
    <property type="entry name" value="Glu-tRNAGln amidotransferase C subunit"/>
    <property type="match status" value="1"/>
</dbReference>
<proteinExistence type="inferred from homology"/>
<organism>
    <name type="scientific">Chlorobium luteolum (strain DSM 273 / BCRC 81028 / 2530)</name>
    <name type="common">Pelodictyon luteolum</name>
    <dbReference type="NCBI Taxonomy" id="319225"/>
    <lineage>
        <taxon>Bacteria</taxon>
        <taxon>Pseudomonadati</taxon>
        <taxon>Chlorobiota</taxon>
        <taxon>Chlorobiia</taxon>
        <taxon>Chlorobiales</taxon>
        <taxon>Chlorobiaceae</taxon>
        <taxon>Chlorobium/Pelodictyon group</taxon>
        <taxon>Pelodictyon</taxon>
    </lineage>
</organism>
<sequence length="95" mass="10815">MSVTRKDVDYIAELARLSFTDEEASRMTDELNSILHYVEKLGELDTEGVLPLSNIHDQKNVLRDDVERPSISNAEALQNAPDRQDRFFKVPKVIG</sequence>
<protein>
    <recommendedName>
        <fullName evidence="1">Aspartyl/glutamyl-tRNA(Asn/Gln) amidotransferase subunit C</fullName>
        <shortName evidence="1">Asp/Glu-ADT subunit C</shortName>
        <ecNumber evidence="1">6.3.5.-</ecNumber>
    </recommendedName>
</protein>
<keyword id="KW-0067">ATP-binding</keyword>
<keyword id="KW-0436">Ligase</keyword>
<keyword id="KW-0547">Nucleotide-binding</keyword>
<keyword id="KW-0648">Protein biosynthesis</keyword>
<keyword id="KW-1185">Reference proteome</keyword>
<name>GATC_CHLL3</name>
<comment type="function">
    <text evidence="1">Allows the formation of correctly charged Asn-tRNA(Asn) or Gln-tRNA(Gln) through the transamidation of misacylated Asp-tRNA(Asn) or Glu-tRNA(Gln) in organisms which lack either or both of asparaginyl-tRNA or glutaminyl-tRNA synthetases. The reaction takes place in the presence of glutamine and ATP through an activated phospho-Asp-tRNA(Asn) or phospho-Glu-tRNA(Gln).</text>
</comment>
<comment type="catalytic activity">
    <reaction evidence="1">
        <text>L-glutamyl-tRNA(Gln) + L-glutamine + ATP + H2O = L-glutaminyl-tRNA(Gln) + L-glutamate + ADP + phosphate + H(+)</text>
        <dbReference type="Rhea" id="RHEA:17521"/>
        <dbReference type="Rhea" id="RHEA-COMP:9681"/>
        <dbReference type="Rhea" id="RHEA-COMP:9684"/>
        <dbReference type="ChEBI" id="CHEBI:15377"/>
        <dbReference type="ChEBI" id="CHEBI:15378"/>
        <dbReference type="ChEBI" id="CHEBI:29985"/>
        <dbReference type="ChEBI" id="CHEBI:30616"/>
        <dbReference type="ChEBI" id="CHEBI:43474"/>
        <dbReference type="ChEBI" id="CHEBI:58359"/>
        <dbReference type="ChEBI" id="CHEBI:78520"/>
        <dbReference type="ChEBI" id="CHEBI:78521"/>
        <dbReference type="ChEBI" id="CHEBI:456216"/>
    </reaction>
</comment>
<comment type="catalytic activity">
    <reaction evidence="1">
        <text>L-aspartyl-tRNA(Asn) + L-glutamine + ATP + H2O = L-asparaginyl-tRNA(Asn) + L-glutamate + ADP + phosphate + 2 H(+)</text>
        <dbReference type="Rhea" id="RHEA:14513"/>
        <dbReference type="Rhea" id="RHEA-COMP:9674"/>
        <dbReference type="Rhea" id="RHEA-COMP:9677"/>
        <dbReference type="ChEBI" id="CHEBI:15377"/>
        <dbReference type="ChEBI" id="CHEBI:15378"/>
        <dbReference type="ChEBI" id="CHEBI:29985"/>
        <dbReference type="ChEBI" id="CHEBI:30616"/>
        <dbReference type="ChEBI" id="CHEBI:43474"/>
        <dbReference type="ChEBI" id="CHEBI:58359"/>
        <dbReference type="ChEBI" id="CHEBI:78515"/>
        <dbReference type="ChEBI" id="CHEBI:78516"/>
        <dbReference type="ChEBI" id="CHEBI:456216"/>
    </reaction>
</comment>
<comment type="subunit">
    <text evidence="1">Heterotrimer of A, B and C subunits.</text>
</comment>
<comment type="similarity">
    <text evidence="1">Belongs to the GatC family.</text>
</comment>
<evidence type="ECO:0000255" key="1">
    <source>
        <dbReference type="HAMAP-Rule" id="MF_00122"/>
    </source>
</evidence>
<accession>Q3B606</accession>
<reference key="1">
    <citation type="submission" date="2005-08" db="EMBL/GenBank/DDBJ databases">
        <title>Complete sequence of Pelodictyon luteolum DSM 273.</title>
        <authorList>
            <consortium name="US DOE Joint Genome Institute"/>
            <person name="Copeland A."/>
            <person name="Lucas S."/>
            <person name="Lapidus A."/>
            <person name="Barry K."/>
            <person name="Detter J.C."/>
            <person name="Glavina T."/>
            <person name="Hammon N."/>
            <person name="Israni S."/>
            <person name="Pitluck S."/>
            <person name="Bryant D."/>
            <person name="Schmutz J."/>
            <person name="Larimer F."/>
            <person name="Land M."/>
            <person name="Kyrpides N."/>
            <person name="Ivanova N."/>
            <person name="Richardson P."/>
        </authorList>
    </citation>
    <scope>NUCLEOTIDE SEQUENCE [LARGE SCALE GENOMIC DNA]</scope>
    <source>
        <strain>DSM 273 / BCRC 81028 / 2530</strain>
    </source>
</reference>
<feature type="chain" id="PRO_1000016166" description="Aspartyl/glutamyl-tRNA(Asn/Gln) amidotransferase subunit C">
    <location>
        <begin position="1"/>
        <end position="95"/>
    </location>
</feature>
<gene>
    <name evidence="1" type="primary">gatC</name>
    <name type="ordered locus">Plut_0337</name>
</gene>